<proteinExistence type="evidence at transcript level"/>
<keyword id="KW-0011">Acute phase</keyword>
<keyword id="KW-0202">Cytokine</keyword>
<keyword id="KW-1015">Disulfide bond</keyword>
<keyword id="KW-0339">Growth factor</keyword>
<keyword id="KW-0597">Phosphoprotein</keyword>
<keyword id="KW-1185">Reference proteome</keyword>
<keyword id="KW-0964">Secreted</keyword>
<keyword id="KW-0732">Signal</keyword>
<dbReference type="EMBL" id="U12234">
    <property type="protein sequence ID" value="AAA83030.1"/>
    <property type="molecule type" value="mRNA"/>
</dbReference>
<dbReference type="EMBL" id="AF275796">
    <property type="protein sequence ID" value="AAF86275.1"/>
    <property type="molecule type" value="mRNA"/>
</dbReference>
<dbReference type="RefSeq" id="NP_001003301.1">
    <property type="nucleotide sequence ID" value="NM_001003301.1"/>
</dbReference>
<dbReference type="SMR" id="P41323"/>
<dbReference type="FunCoup" id="P41323">
    <property type="interactions" value="219"/>
</dbReference>
<dbReference type="STRING" id="9615.ENSCAFP00000053025"/>
<dbReference type="PaxDb" id="9612-ENSCAFP00000004016"/>
<dbReference type="GeneID" id="403985"/>
<dbReference type="KEGG" id="cfa:403985"/>
<dbReference type="CTD" id="3569"/>
<dbReference type="eggNOG" id="ENOG502S7Q4">
    <property type="taxonomic scope" value="Eukaryota"/>
</dbReference>
<dbReference type="InParanoid" id="P41323"/>
<dbReference type="OrthoDB" id="8943569at2759"/>
<dbReference type="Proteomes" id="UP000002254">
    <property type="component" value="Unplaced"/>
</dbReference>
<dbReference type="Proteomes" id="UP000694429">
    <property type="component" value="Unplaced"/>
</dbReference>
<dbReference type="Proteomes" id="UP000694542">
    <property type="component" value="Unplaced"/>
</dbReference>
<dbReference type="Proteomes" id="UP000805418">
    <property type="component" value="Unplaced"/>
</dbReference>
<dbReference type="GO" id="GO:0005615">
    <property type="term" value="C:extracellular space"/>
    <property type="evidence" value="ECO:0000318"/>
    <property type="project" value="GO_Central"/>
</dbReference>
<dbReference type="GO" id="GO:0005896">
    <property type="term" value="C:interleukin-6 receptor complex"/>
    <property type="evidence" value="ECO:0000318"/>
    <property type="project" value="GO_Central"/>
</dbReference>
<dbReference type="GO" id="GO:0005125">
    <property type="term" value="F:cytokine activity"/>
    <property type="evidence" value="ECO:0000318"/>
    <property type="project" value="GO_Central"/>
</dbReference>
<dbReference type="GO" id="GO:0008083">
    <property type="term" value="F:growth factor activity"/>
    <property type="evidence" value="ECO:0000318"/>
    <property type="project" value="GO_Central"/>
</dbReference>
<dbReference type="GO" id="GO:0005138">
    <property type="term" value="F:interleukin-6 receptor binding"/>
    <property type="evidence" value="ECO:0007669"/>
    <property type="project" value="InterPro"/>
</dbReference>
<dbReference type="GO" id="GO:0006953">
    <property type="term" value="P:acute-phase response"/>
    <property type="evidence" value="ECO:0007669"/>
    <property type="project" value="UniProtKB-KW"/>
</dbReference>
<dbReference type="GO" id="GO:0042593">
    <property type="term" value="P:glucose homeostasis"/>
    <property type="evidence" value="ECO:0000250"/>
    <property type="project" value="UniProtKB"/>
</dbReference>
<dbReference type="GO" id="GO:0072574">
    <property type="term" value="P:hepatocyte proliferation"/>
    <property type="evidence" value="ECO:0000250"/>
    <property type="project" value="UniProtKB"/>
</dbReference>
<dbReference type="GO" id="GO:0070102">
    <property type="term" value="P:interleukin-6-mediated signaling pathway"/>
    <property type="evidence" value="ECO:0000250"/>
    <property type="project" value="UniProtKB"/>
</dbReference>
<dbReference type="GO" id="GO:0097421">
    <property type="term" value="P:liver regeneration"/>
    <property type="evidence" value="ECO:0000250"/>
    <property type="project" value="UniProtKB"/>
</dbReference>
<dbReference type="GO" id="GO:0008284">
    <property type="term" value="P:positive regulation of cell population proliferation"/>
    <property type="evidence" value="ECO:0000318"/>
    <property type="project" value="GO_Central"/>
</dbReference>
<dbReference type="GO" id="GO:0051240">
    <property type="term" value="P:positive regulation of multicellular organismal process"/>
    <property type="evidence" value="ECO:0007669"/>
    <property type="project" value="UniProtKB-ARBA"/>
</dbReference>
<dbReference type="GO" id="GO:0046427">
    <property type="term" value="P:positive regulation of receptor signaling pathway via JAK-STAT"/>
    <property type="evidence" value="ECO:0000318"/>
    <property type="project" value="GO_Central"/>
</dbReference>
<dbReference type="GO" id="GO:1904894">
    <property type="term" value="P:positive regulation of receptor signaling pathway via STAT"/>
    <property type="evidence" value="ECO:0000250"/>
    <property type="project" value="UniProtKB"/>
</dbReference>
<dbReference type="GO" id="GO:0070092">
    <property type="term" value="P:regulation of glucagon secretion"/>
    <property type="evidence" value="ECO:0000250"/>
    <property type="project" value="UniProtKB"/>
</dbReference>
<dbReference type="GO" id="GO:0050796">
    <property type="term" value="P:regulation of insulin secretion"/>
    <property type="evidence" value="ECO:0000250"/>
    <property type="project" value="UniProtKB"/>
</dbReference>
<dbReference type="GO" id="GO:0014823">
    <property type="term" value="P:response to activity"/>
    <property type="evidence" value="ECO:0000250"/>
    <property type="project" value="UniProtKB"/>
</dbReference>
<dbReference type="GO" id="GO:0072540">
    <property type="term" value="P:T-helper 17 cell lineage commitment"/>
    <property type="evidence" value="ECO:0000250"/>
    <property type="project" value="UniProtKB"/>
</dbReference>
<dbReference type="GO" id="GO:0010573">
    <property type="term" value="P:vascular endothelial growth factor production"/>
    <property type="evidence" value="ECO:0000250"/>
    <property type="project" value="UniProtKB"/>
</dbReference>
<dbReference type="FunFam" id="1.20.1250.10:FF:000006">
    <property type="entry name" value="Interleukin-6"/>
    <property type="match status" value="1"/>
</dbReference>
<dbReference type="Gene3D" id="1.20.1250.10">
    <property type="match status" value="1"/>
</dbReference>
<dbReference type="InterPro" id="IPR009079">
    <property type="entry name" value="4_helix_cytokine-like_core"/>
</dbReference>
<dbReference type="InterPro" id="IPR003574">
    <property type="entry name" value="IL-6-like"/>
</dbReference>
<dbReference type="InterPro" id="IPR030474">
    <property type="entry name" value="IL-6/GCSF/MGF"/>
</dbReference>
<dbReference type="InterPro" id="IPR030473">
    <property type="entry name" value="IL6/GCSF/MGF_CS"/>
</dbReference>
<dbReference type="PANTHER" id="PTHR48494">
    <property type="entry name" value="INTERLEUKIN-6"/>
    <property type="match status" value="1"/>
</dbReference>
<dbReference type="PANTHER" id="PTHR48494:SF1">
    <property type="entry name" value="INTERLEUKIN-6"/>
    <property type="match status" value="1"/>
</dbReference>
<dbReference type="Pfam" id="PF00489">
    <property type="entry name" value="IL6"/>
    <property type="match status" value="1"/>
</dbReference>
<dbReference type="PIRSF" id="PIRSF001935">
    <property type="entry name" value="IL6_MGF_GCSF"/>
    <property type="match status" value="1"/>
</dbReference>
<dbReference type="PRINTS" id="PR00433">
    <property type="entry name" value="IL6GCSFMGF"/>
</dbReference>
<dbReference type="PRINTS" id="PR00434">
    <property type="entry name" value="INTERLEUKIN6"/>
</dbReference>
<dbReference type="SMART" id="SM00126">
    <property type="entry name" value="IL6"/>
    <property type="match status" value="1"/>
</dbReference>
<dbReference type="SUPFAM" id="SSF47266">
    <property type="entry name" value="4-helical cytokines"/>
    <property type="match status" value="1"/>
</dbReference>
<dbReference type="PROSITE" id="PS00254">
    <property type="entry name" value="INTERLEUKIN_6"/>
    <property type="match status" value="1"/>
</dbReference>
<comment type="function">
    <text evidence="2">Cytokine with a wide variety of biological functions in immunity, tissue regeneration, and metabolism. Binds to IL6R, then the complex associates to the signaling subunit IL6ST/gp130 to trigger the intracellular IL6-signaling pathway. The interaction with the membrane-bound IL6R and IL6ST stimulates 'classic signaling', whereas the binding of IL6 and soluble IL6R to IL6ST stimulates 'trans-signaling'. Alternatively, 'cluster signaling' occurs when membrane-bound IL6:IL6R complexes on transmitter cells activate IL6ST receptors on neighboring receiver cells.</text>
</comment>
<comment type="function">
    <text evidence="2 3">IL6 is a potent inducer of the acute phase response. Rapid production of IL6 contributes to host defense during infection and tissue injury, but excessive IL6 synthesis is involved in disease pathology. In the innate immune response, is synthesized by myeloid cells, such as macrophages and dendritic cells, upon recognition of pathogens through toll-like receptors (TLRs) at the site of infection or tissue injury (By similarity). In the adaptive immune response, is required for the differentiation of B cells into immunoglobulin-secreting cells. Plays a major role in the differentiation of CD4(+) T cell subsets. Essential factor for the development of T follicular helper (Tfh) cells that are required for the induction of germinal-center formation. Required to drive naive CD4(+) T cells to the Th17 lineage. Also required for proliferation of myeloma cells and the survival of plasmablast cells (By similarity).</text>
</comment>
<comment type="function">
    <text evidence="2 3">Acts as an essential factor in bone homeostasis and on vessels directly or indirectly by induction of VEGF, resulting in increased angiogenesis activity and vascular permeability. Induces, through 'trans-signaling' and synergistically with IL1B and TNF, the production of VEGF. Involved in metabolic controls, is discharged into the bloodstream after muscle contraction increasing lipolysis and improving insulin resistance (By similarity). 'Trans-signaling' in central nervous system also regulates energy and glucose homeostasis. Mediates, through GLP-1, crosstalk between insulin-sensitive tissues, intestinal L cells and pancreatic islets to adapt to changes in insulin demand (By similarity). Also acts as a myokine (By similarity). Plays a protective role during liver injury, being required for maintenance of tissue regeneration (By similarity). Also has a pivotal role in iron metabolism by regulating HAMP/hepcidin expression upon inflammation or bacterial infection (By similarity). Through activation of IL6ST-YAP-NOTCH pathway, induces inflammation-induced epithelial regeneration (By similarity).</text>
</comment>
<comment type="subunit">
    <text evidence="2">Component of a hexamer of two molecules each of IL6, IL6R and IL6ST; first binds to IL6R to associate with the signaling subunit IL6ST. Interacts with IL6R (via the N-terminal ectodomain); this interaction may be affected by IL6R-binding with SORL1, hence decreasing IL6 cis signaling. Interacts with SORL1 (via the N-terminal ectodomain); this interaction leads to IL6 internalization and lysosomal degradation. May form a trimeric complex with the soluble SORL1 ectodomain and soluble IL6R receptor; this interaction might stabilize circulating IL6, hence promoting IL6 trans signaling.</text>
</comment>
<comment type="subcellular location">
    <subcellularLocation>
        <location evidence="2">Secreted</location>
    </subcellularLocation>
</comment>
<comment type="similarity">
    <text evidence="5">Belongs to the IL-6 superfamily.</text>
</comment>
<reference key="1">
    <citation type="journal article" date="1994" name="Ann. N. Y. Acad. Sci.">
        <title>Regulation of ICAM-1 and IL-6 in myocardial ischemia: effect of reperfusion.</title>
        <authorList>
            <person name="Kukielka G.L."/>
            <person name="Youker K.A."/>
            <person name="Hawkins H.K."/>
            <person name="Perrard J.L."/>
            <person name="Michael L.H."/>
            <person name="Ballantyne C.M."/>
            <person name="Smith C.W."/>
            <person name="Entman M.L."/>
        </authorList>
    </citation>
    <scope>NUCLEOTIDE SEQUENCE [MRNA]</scope>
    <source>
        <strain>Mongrel</strain>
    </source>
</reference>
<reference key="2">
    <citation type="submission" date="2000-06" db="EMBL/GenBank/DDBJ databases">
        <title>Canine IL-6 mRNA.</title>
        <authorList>
            <person name="Youn H.-Y."/>
            <person name="Shin I.-S."/>
        </authorList>
    </citation>
    <scope>NUCLEOTIDE SEQUENCE [MRNA]</scope>
</reference>
<sequence>MNSLSTSAFSLGLLLVMATAFPTPGPLAGDSKDDATSNSLPLTSANKVEELIKYILGKISALRKEMCDKFNKCEDSKEALAENNLHLPKLEGKDGCFQSGFNQETCLTRITTGLVEFQLHLNILQNNYEGDKENVKSVHMSTKILVQMLKSKVKNQDEVTTPDPTTDASLQAILQSQDECVKHTTIHLILRSLEDFLQFSLRAVRIM</sequence>
<name>IL6_CANLF</name>
<evidence type="ECO:0000250" key="1"/>
<evidence type="ECO:0000250" key="2">
    <source>
        <dbReference type="UniProtKB" id="P05231"/>
    </source>
</evidence>
<evidence type="ECO:0000250" key="3">
    <source>
        <dbReference type="UniProtKB" id="P08505"/>
    </source>
</evidence>
<evidence type="ECO:0000255" key="4"/>
<evidence type="ECO:0000305" key="5"/>
<protein>
    <recommendedName>
        <fullName>Interleukin-6</fullName>
        <shortName>IL-6</shortName>
    </recommendedName>
</protein>
<gene>
    <name type="primary">IL6</name>
</gene>
<organism>
    <name type="scientific">Canis lupus familiaris</name>
    <name type="common">Dog</name>
    <name type="synonym">Canis familiaris</name>
    <dbReference type="NCBI Taxonomy" id="9615"/>
    <lineage>
        <taxon>Eukaryota</taxon>
        <taxon>Metazoa</taxon>
        <taxon>Chordata</taxon>
        <taxon>Craniata</taxon>
        <taxon>Vertebrata</taxon>
        <taxon>Euteleostomi</taxon>
        <taxon>Mammalia</taxon>
        <taxon>Eutheria</taxon>
        <taxon>Laurasiatheria</taxon>
        <taxon>Carnivora</taxon>
        <taxon>Caniformia</taxon>
        <taxon>Canidae</taxon>
        <taxon>Canis</taxon>
    </lineage>
</organism>
<accession>P41323</accession>
<accession>Q9MYZ7</accession>
<feature type="signal peptide" evidence="4">
    <location>
        <begin position="1"/>
        <end position="20"/>
    </location>
</feature>
<feature type="chain" id="PRO_0000015576" description="Interleukin-6">
    <location>
        <begin position="21"/>
        <end position="207"/>
    </location>
</feature>
<feature type="modified residue" description="Phosphoserine" evidence="2">
    <location>
        <position position="76"/>
    </location>
</feature>
<feature type="disulfide bond" evidence="1">
    <location>
        <begin position="67"/>
        <end position="73"/>
    </location>
</feature>
<feature type="disulfide bond" evidence="1">
    <location>
        <begin position="96"/>
        <end position="106"/>
    </location>
</feature>
<feature type="sequence conflict" description="In Ref. 2; AAF86275." evidence="5" ref="2">
    <original>CV</original>
    <variation>WL</variation>
    <location>
        <begin position="180"/>
        <end position="181"/>
    </location>
</feature>